<proteinExistence type="evidence at protein level"/>
<dbReference type="EMBL" id="M25644">
    <property type="protein sequence ID" value="AAA31143.1"/>
    <property type="molecule type" value="mRNA"/>
</dbReference>
<dbReference type="PIR" id="A60970">
    <property type="entry name" value="NVPG2"/>
</dbReference>
<dbReference type="RefSeq" id="NP_999117.1">
    <property type="nucleotide sequence ID" value="NM_213952.2"/>
</dbReference>
<dbReference type="SMR" id="P01183"/>
<dbReference type="FunCoup" id="P01183">
    <property type="interactions" value="54"/>
</dbReference>
<dbReference type="GlyCosmos" id="P01183">
    <property type="glycosylation" value="1 site, No reported glycans"/>
</dbReference>
<dbReference type="GlyGen" id="P01183">
    <property type="glycosylation" value="1 site"/>
</dbReference>
<dbReference type="PaxDb" id="9823-ENSSSCP00000007625"/>
<dbReference type="Ensembl" id="ENSSSCT00025060715.1">
    <property type="protein sequence ID" value="ENSSSCP00025025756.1"/>
    <property type="gene ID" value="ENSSSCG00025044667.1"/>
</dbReference>
<dbReference type="Ensembl" id="ENSSSCT00030049131.1">
    <property type="protein sequence ID" value="ENSSSCP00030022239.1"/>
    <property type="gene ID" value="ENSSSCG00030035426.1"/>
</dbReference>
<dbReference type="Ensembl" id="ENSSSCT00035056711.1">
    <property type="protein sequence ID" value="ENSSSCP00035022809.1"/>
    <property type="gene ID" value="ENSSSCG00035042676.1"/>
</dbReference>
<dbReference type="Ensembl" id="ENSSSCT00040038404.1">
    <property type="protein sequence ID" value="ENSSSCP00040016042.1"/>
    <property type="gene ID" value="ENSSSCG00040028620.1"/>
</dbReference>
<dbReference type="Ensembl" id="ENSSSCT00045003768.1">
    <property type="protein sequence ID" value="ENSSSCP00045002384.1"/>
    <property type="gene ID" value="ENSSSCG00045002408.1"/>
</dbReference>
<dbReference type="Ensembl" id="ENSSSCT00050079715.1">
    <property type="protein sequence ID" value="ENSSSCP00050034263.1"/>
    <property type="gene ID" value="ENSSSCG00050058482.1"/>
</dbReference>
<dbReference type="Ensembl" id="ENSSSCT00060014591.1">
    <property type="protein sequence ID" value="ENSSSCP00060005660.1"/>
    <property type="gene ID" value="ENSSSCG00060011180.1"/>
</dbReference>
<dbReference type="Ensembl" id="ENSSSCT00065087661.1">
    <property type="protein sequence ID" value="ENSSSCP00065038353.1"/>
    <property type="gene ID" value="ENSSSCG00065063862.1"/>
</dbReference>
<dbReference type="Ensembl" id="ENSSSCT00090014546">
    <property type="protein sequence ID" value="ENSSSCP00090009268"/>
    <property type="gene ID" value="ENSSSCG00090008147"/>
</dbReference>
<dbReference type="Ensembl" id="ENSSSCT00105053064">
    <property type="protein sequence ID" value="ENSSSCP00105037318"/>
    <property type="gene ID" value="ENSSSCG00105027945"/>
</dbReference>
<dbReference type="Ensembl" id="ENSSSCT00115000675">
    <property type="protein sequence ID" value="ENSSSCP00115000616"/>
    <property type="gene ID" value="ENSSSCG00115000456"/>
</dbReference>
<dbReference type="GeneID" id="396995"/>
<dbReference type="KEGG" id="ssc:396995"/>
<dbReference type="CTD" id="551"/>
<dbReference type="eggNOG" id="ENOG502S21K">
    <property type="taxonomic scope" value="Eukaryota"/>
</dbReference>
<dbReference type="InParanoid" id="P01183"/>
<dbReference type="OrthoDB" id="10056056at2759"/>
<dbReference type="Reactome" id="R-SSC-388479">
    <property type="pathway name" value="Vasopressin-like receptors"/>
</dbReference>
<dbReference type="Reactome" id="R-SSC-416476">
    <property type="pathway name" value="G alpha (q) signalling events"/>
</dbReference>
<dbReference type="Reactome" id="R-SSC-418555">
    <property type="pathway name" value="G alpha (s) signalling events"/>
</dbReference>
<dbReference type="Reactome" id="R-SSC-432040">
    <property type="pathway name" value="Vasopressin regulates renal water homeostasis via Aquaporins"/>
</dbReference>
<dbReference type="Reactome" id="R-SSC-879518">
    <property type="pathway name" value="Transport of organic anions"/>
</dbReference>
<dbReference type="Reactome" id="R-SSC-8856825">
    <property type="pathway name" value="Cargo recognition for clathrin-mediated endocytosis"/>
</dbReference>
<dbReference type="Reactome" id="R-SSC-8856828">
    <property type="pathway name" value="Clathrin-mediated endocytosis"/>
</dbReference>
<dbReference type="Proteomes" id="UP000008227">
    <property type="component" value="Unplaced"/>
</dbReference>
<dbReference type="Proteomes" id="UP000314985">
    <property type="component" value="Unplaced"/>
</dbReference>
<dbReference type="Proteomes" id="UP000694570">
    <property type="component" value="Unplaced"/>
</dbReference>
<dbReference type="Proteomes" id="UP000694571">
    <property type="component" value="Unplaced"/>
</dbReference>
<dbReference type="Proteomes" id="UP000694720">
    <property type="component" value="Unplaced"/>
</dbReference>
<dbReference type="Proteomes" id="UP000694722">
    <property type="component" value="Unplaced"/>
</dbReference>
<dbReference type="Proteomes" id="UP000694723">
    <property type="component" value="Unplaced"/>
</dbReference>
<dbReference type="Proteomes" id="UP000694724">
    <property type="component" value="Unplaced"/>
</dbReference>
<dbReference type="Proteomes" id="UP000694725">
    <property type="component" value="Unplaced"/>
</dbReference>
<dbReference type="Proteomes" id="UP000694726">
    <property type="component" value="Unplaced"/>
</dbReference>
<dbReference type="Proteomes" id="UP000694727">
    <property type="component" value="Unplaced"/>
</dbReference>
<dbReference type="Proteomes" id="UP000694728">
    <property type="component" value="Unplaced"/>
</dbReference>
<dbReference type="GO" id="GO:0005615">
    <property type="term" value="C:extracellular space"/>
    <property type="evidence" value="ECO:0000318"/>
    <property type="project" value="GO_Central"/>
</dbReference>
<dbReference type="GO" id="GO:0030141">
    <property type="term" value="C:secretory granule"/>
    <property type="evidence" value="ECO:0000318"/>
    <property type="project" value="GO_Central"/>
</dbReference>
<dbReference type="GO" id="GO:0005185">
    <property type="term" value="F:neurohypophyseal hormone activity"/>
    <property type="evidence" value="ECO:0007669"/>
    <property type="project" value="InterPro"/>
</dbReference>
<dbReference type="GO" id="GO:0005184">
    <property type="term" value="F:neuropeptide hormone activity"/>
    <property type="evidence" value="ECO:0000318"/>
    <property type="project" value="GO_Central"/>
</dbReference>
<dbReference type="GO" id="GO:0031894">
    <property type="term" value="F:V1A vasopressin receptor binding"/>
    <property type="evidence" value="ECO:0000318"/>
    <property type="project" value="GO_Central"/>
</dbReference>
<dbReference type="GO" id="GO:0042310">
    <property type="term" value="P:vasoconstriction"/>
    <property type="evidence" value="ECO:0007669"/>
    <property type="project" value="UniProtKB-KW"/>
</dbReference>
<dbReference type="FunFam" id="2.60.9.10:FF:000001">
    <property type="entry name" value="oxytocin-neurophysin 1"/>
    <property type="match status" value="1"/>
</dbReference>
<dbReference type="Gene3D" id="2.60.9.10">
    <property type="entry name" value="Neurohypophysial hormone domain"/>
    <property type="match status" value="1"/>
</dbReference>
<dbReference type="InterPro" id="IPR000981">
    <property type="entry name" value="Neurhyp_horm"/>
</dbReference>
<dbReference type="InterPro" id="IPR036387">
    <property type="entry name" value="Neurhyp_horm_dom_sf"/>
</dbReference>
<dbReference type="InterPro" id="IPR022423">
    <property type="entry name" value="Neurohypophysial_hormone_CS"/>
</dbReference>
<dbReference type="PANTHER" id="PTHR11681">
    <property type="entry name" value="NEUROPHYSIN"/>
    <property type="match status" value="1"/>
</dbReference>
<dbReference type="PANTHER" id="PTHR11681:SF9">
    <property type="entry name" value="VASOPRESSIN-NEUROPHYSIN 2-COPEPTIN"/>
    <property type="match status" value="1"/>
</dbReference>
<dbReference type="Pfam" id="PF00220">
    <property type="entry name" value="Hormone_4"/>
    <property type="match status" value="1"/>
</dbReference>
<dbReference type="Pfam" id="PF00184">
    <property type="entry name" value="Hormone_5"/>
    <property type="match status" value="1"/>
</dbReference>
<dbReference type="PIRSF" id="PIRSF001815">
    <property type="entry name" value="Nonapeptide_hormone_precursor"/>
    <property type="match status" value="1"/>
</dbReference>
<dbReference type="PRINTS" id="PR00831">
    <property type="entry name" value="NEUROPHYSIN"/>
</dbReference>
<dbReference type="SMART" id="SM00003">
    <property type="entry name" value="NH"/>
    <property type="match status" value="1"/>
</dbReference>
<dbReference type="SUPFAM" id="SSF49606">
    <property type="entry name" value="Neurophysin II"/>
    <property type="match status" value="1"/>
</dbReference>
<dbReference type="PROSITE" id="PS00264">
    <property type="entry name" value="NEUROHYPOPHYS_HORM"/>
    <property type="match status" value="1"/>
</dbReference>
<keyword id="KW-0027">Amidation</keyword>
<keyword id="KW-0165">Cleavage on pair of basic residues</keyword>
<keyword id="KW-0903">Direct protein sequencing</keyword>
<keyword id="KW-1015">Disulfide bond</keyword>
<keyword id="KW-0325">Glycoprotein</keyword>
<keyword id="KW-0372">Hormone</keyword>
<keyword id="KW-1185">Reference proteome</keyword>
<keyword id="KW-0964">Secreted</keyword>
<keyword id="KW-0732">Signal</keyword>
<keyword id="KW-0838">Vasoactive</keyword>
<keyword id="KW-0839">Vasoconstrictor</keyword>
<reference key="1">
    <citation type="journal article" date="1986" name="Biol. Chem. Hoppe-Seyler">
        <title>The neurohypophyseal hormones vasopressin and oxytocin. Precursor structure, synthesis and regulation.</title>
        <authorList>
            <person name="Rehbein M."/>
            <person name="Hillers M."/>
            <person name="Mohr E."/>
            <person name="Ivell R."/>
            <person name="Morley S."/>
            <person name="Schmale H."/>
            <person name="Richter D."/>
        </authorList>
    </citation>
    <scope>NUCLEOTIDE SEQUENCE [MRNA]</scope>
</reference>
<reference key="2">
    <citation type="journal article" date="1990" name="J. Mol. Endocrinol.">
        <title>Poly(A) tail length of oxytocin- and lysine vasopressin-encoding mRNAs increases during development in the porcine hypothalamus.</title>
        <authorList>
            <person name="Rehbein M."/>
            <person name="Richter D."/>
        </authorList>
    </citation>
    <scope>NUCLEOTIDE SEQUENCE [MRNA]</scope>
</reference>
<reference key="3">
    <citation type="journal article" date="1952" name="J. Am. Chem. Soc.">
        <title>Partial purification and amino acid content of vasopressin from hog posterior pituitary glands.</title>
        <authorList>
            <person name="Popenoe E.A."/>
            <person name="Lawler H.C."/>
            <person name="du Vigneaud V."/>
        </authorList>
    </citation>
    <scope>PROTEIN SEQUENCE OF 20-28</scope>
</reference>
<reference key="4">
    <citation type="journal article" date="1971" name="J. Biol. Chem.">
        <title>Amino acid sequence of porcine neurophysin-I.</title>
        <authorList>
            <person name="Wuu T.-C."/>
            <person name="Crumm S.E."/>
            <person name="Saffran M."/>
        </authorList>
    </citation>
    <scope>PROTEIN SEQUENCE OF 32-123</scope>
</reference>
<reference key="5">
    <citation type="journal article" date="1976" name="J. Biol. Chem.">
        <title>Characterization of porcine neurophysin. III. Its resemblance and possible relationship to porcine neurophysin I.</title>
        <authorList>
            <person name="Wuu T.-C."/>
            <person name="Crumm S.E."/>
        </authorList>
    </citation>
    <scope>PROTEIN SEQUENCE OF 118-126</scope>
</reference>
<reference key="6">
    <citation type="journal article" date="1976" name="FEBS Lett.">
        <title>Characterization of porcine MSEL-neurophysin.</title>
        <authorList>
            <person name="Chauvet M.-T."/>
            <person name="Codogno P."/>
            <person name="Chauvet J."/>
            <person name="Acher R."/>
        </authorList>
    </citation>
    <scope>PROTEIN SEQUENCE OF 32-126</scope>
</reference>
<reference key="7">
    <citation type="journal article" date="1979" name="Biochem. Biophys. Res. Commun.">
        <title>A new glycopeptide in pig, ox and sheep pituitary.</title>
        <authorList>
            <person name="Smyth D.G."/>
            <person name="Massey D.E."/>
        </authorList>
    </citation>
    <scope>PROTEIN SEQUENCE OF 128-166</scope>
</reference>
<reference key="8">
    <citation type="journal article" date="1972" name="Eur. J. Biochem.">
        <title>A glycopeptide from the posterior lobe of pig pituitaries. 2. Primary structure.</title>
        <authorList>
            <person name="Holwerda D.A."/>
        </authorList>
    </citation>
    <scope>PROTEIN SEQUENCE OF 128-144</scope>
</reference>
<gene>
    <name type="primary">AVP</name>
</gene>
<organism>
    <name type="scientific">Sus scrofa</name>
    <name type="common">Pig</name>
    <dbReference type="NCBI Taxonomy" id="9823"/>
    <lineage>
        <taxon>Eukaryota</taxon>
        <taxon>Metazoa</taxon>
        <taxon>Chordata</taxon>
        <taxon>Craniata</taxon>
        <taxon>Vertebrata</taxon>
        <taxon>Euteleostomi</taxon>
        <taxon>Mammalia</taxon>
        <taxon>Eutheria</taxon>
        <taxon>Laurasiatheria</taxon>
        <taxon>Artiodactyla</taxon>
        <taxon>Suina</taxon>
        <taxon>Suidae</taxon>
        <taxon>Sus</taxon>
    </lineage>
</organism>
<sequence>MPDATLPACFLGLLALTSACYFQNCPKGGKRAMSDLELRQCLPCGPGGKGRCFGPSICCGDELGCFVGTAEALRCQEENYLPSPCQSGQKPCGSGGRCAAAGICCNDESCVTEPECREGASFLRRARASDRSNATLLDGPSGALLLRLVQLAGAPEPAEPAQPGVY</sequence>
<accession>P01183</accession>
<name>NEU2_PIG</name>
<feature type="signal peptide" evidence="3">
    <location>
        <begin position="1"/>
        <end position="19"/>
    </location>
</feature>
<feature type="peptide" id="PRO_0000020521" description="Lys-vasopressin">
    <location>
        <begin position="20"/>
        <end position="28"/>
    </location>
</feature>
<feature type="chain" id="PRO_0000020522" description="Neurophysin 2">
    <location>
        <begin position="32"/>
        <end position="126"/>
    </location>
</feature>
<feature type="peptide" id="PRO_0000020523" description="Copeptin">
    <location>
        <begin position="128"/>
        <end position="166"/>
    </location>
</feature>
<feature type="site" description="Important for agonist activity on V1aR/AVPR1A" evidence="2">
    <location>
        <position position="28"/>
    </location>
</feature>
<feature type="modified residue" description="Glycine amide" evidence="2">
    <location>
        <position position="28"/>
    </location>
</feature>
<feature type="glycosylation site" description="N-linked (GlcNAc...) asparagine">
    <location>
        <position position="133"/>
    </location>
</feature>
<feature type="disulfide bond">
    <location>
        <begin position="20"/>
        <end position="25"/>
    </location>
</feature>
<feature type="disulfide bond" evidence="1">
    <location>
        <begin position="41"/>
        <end position="85"/>
    </location>
</feature>
<feature type="disulfide bond" evidence="1">
    <location>
        <begin position="44"/>
        <end position="58"/>
    </location>
</feature>
<feature type="disulfide bond" evidence="1">
    <location>
        <begin position="52"/>
        <end position="75"/>
    </location>
</feature>
<feature type="disulfide bond" evidence="1">
    <location>
        <begin position="59"/>
        <end position="65"/>
    </location>
</feature>
<feature type="disulfide bond" evidence="1">
    <location>
        <begin position="92"/>
        <end position="104"/>
    </location>
</feature>
<feature type="disulfide bond" evidence="1">
    <location>
        <begin position="98"/>
        <end position="116"/>
    </location>
</feature>
<feature type="disulfide bond" evidence="1">
    <location>
        <begin position="105"/>
        <end position="110"/>
    </location>
</feature>
<evidence type="ECO:0000250" key="1">
    <source>
        <dbReference type="UniProtKB" id="P01175"/>
    </source>
</evidence>
<evidence type="ECO:0000250" key="2">
    <source>
        <dbReference type="UniProtKB" id="P01185"/>
    </source>
</evidence>
<evidence type="ECO:0000269" key="3">
    <source ref="3"/>
</evidence>
<evidence type="ECO:0000305" key="4"/>
<protein>
    <recommendedName>
        <fullName>Vasopressin-neurophysin 2-copeptin</fullName>
    </recommendedName>
    <alternativeName>
        <fullName>AVP-NPII</fullName>
    </alternativeName>
    <component>
        <recommendedName>
            <fullName>Lys-vasopressin</fullName>
        </recommendedName>
    </component>
    <component>
        <recommendedName>
            <fullName>Neurophysin 2</fullName>
        </recommendedName>
        <alternativeName>
            <fullName>Neurophysin-I/-III</fullName>
        </alternativeName>
    </component>
    <component>
        <recommendedName>
            <fullName>Copeptin</fullName>
        </recommendedName>
    </component>
</protein>
<comment type="function">
    <text>Neurophysin 2 specifically binds vasopressin.</text>
</comment>
<comment type="function">
    <text evidence="2">Vasopressin has a direct antidiuretic action on the kidney, it also causes vasoconstriction of the peripheral vessels. Acts by binding to vasopressin receptors (V1bR/AVPR1B, V1aR/AVPR1A, and V2R/AVPR2) (By similarity).</text>
</comment>
<comment type="subunit">
    <text evidence="2">Interacts with vasopressin receptors V1bR/AVPR1B (Ki=85 pM), V1aR/AVPR1A (Ki=0.6 nM) and V2R/AVPR2 (Ki=4.9 nM) (By similarity). Interacts with oxytocin receptor (OXTR) (Ki=110 nM) (By similarity).</text>
</comment>
<comment type="subcellular location">
    <subcellularLocation>
        <location>Secreted</location>
    </subcellularLocation>
</comment>
<comment type="PTM">
    <text>A shorter neurophysin molecule (32-123) is called neurophysin-I and is derived from the complete protein (called neurophysin III) by proteolytic degradation (in vivo or after extraction).</text>
</comment>
<comment type="similarity">
    <text evidence="4">Belongs to the vasopressin/oxytocin family.</text>
</comment>